<organism>
    <name type="scientific">Amoebophilus asiaticus (strain 5a2)</name>
    <dbReference type="NCBI Taxonomy" id="452471"/>
    <lineage>
        <taxon>Bacteria</taxon>
        <taxon>Pseudomonadati</taxon>
        <taxon>Bacteroidota</taxon>
        <taxon>Cytophagia</taxon>
        <taxon>Cytophagales</taxon>
        <taxon>Amoebophilaceae</taxon>
        <taxon>Candidatus Amoebophilus</taxon>
    </lineage>
</organism>
<dbReference type="EMBL" id="CP001102">
    <property type="protein sequence ID" value="ACE05573.1"/>
    <property type="molecule type" value="Genomic_DNA"/>
</dbReference>
<dbReference type="RefSeq" id="WP_012472344.1">
    <property type="nucleotide sequence ID" value="NC_010830.1"/>
</dbReference>
<dbReference type="SMR" id="B3EUF4"/>
<dbReference type="STRING" id="452471.Aasi_0126"/>
<dbReference type="KEGG" id="aas:Aasi_0126"/>
<dbReference type="eggNOG" id="COG0049">
    <property type="taxonomic scope" value="Bacteria"/>
</dbReference>
<dbReference type="HOGENOM" id="CLU_072226_1_1_10"/>
<dbReference type="OrthoDB" id="9807653at2"/>
<dbReference type="Proteomes" id="UP000001227">
    <property type="component" value="Chromosome"/>
</dbReference>
<dbReference type="GO" id="GO:0015935">
    <property type="term" value="C:small ribosomal subunit"/>
    <property type="evidence" value="ECO:0007669"/>
    <property type="project" value="InterPro"/>
</dbReference>
<dbReference type="GO" id="GO:0019843">
    <property type="term" value="F:rRNA binding"/>
    <property type="evidence" value="ECO:0007669"/>
    <property type="project" value="UniProtKB-UniRule"/>
</dbReference>
<dbReference type="GO" id="GO:0003735">
    <property type="term" value="F:structural constituent of ribosome"/>
    <property type="evidence" value="ECO:0007669"/>
    <property type="project" value="InterPro"/>
</dbReference>
<dbReference type="GO" id="GO:0000049">
    <property type="term" value="F:tRNA binding"/>
    <property type="evidence" value="ECO:0007669"/>
    <property type="project" value="UniProtKB-UniRule"/>
</dbReference>
<dbReference type="GO" id="GO:0006412">
    <property type="term" value="P:translation"/>
    <property type="evidence" value="ECO:0007669"/>
    <property type="project" value="UniProtKB-UniRule"/>
</dbReference>
<dbReference type="CDD" id="cd14869">
    <property type="entry name" value="uS7_Bacteria"/>
    <property type="match status" value="1"/>
</dbReference>
<dbReference type="FunFam" id="1.10.455.10:FF:000001">
    <property type="entry name" value="30S ribosomal protein S7"/>
    <property type="match status" value="1"/>
</dbReference>
<dbReference type="Gene3D" id="1.10.455.10">
    <property type="entry name" value="Ribosomal protein S7 domain"/>
    <property type="match status" value="1"/>
</dbReference>
<dbReference type="HAMAP" id="MF_00480_B">
    <property type="entry name" value="Ribosomal_uS7_B"/>
    <property type="match status" value="1"/>
</dbReference>
<dbReference type="InterPro" id="IPR000235">
    <property type="entry name" value="Ribosomal_uS7"/>
</dbReference>
<dbReference type="InterPro" id="IPR005717">
    <property type="entry name" value="Ribosomal_uS7_bac/org-type"/>
</dbReference>
<dbReference type="InterPro" id="IPR020606">
    <property type="entry name" value="Ribosomal_uS7_CS"/>
</dbReference>
<dbReference type="InterPro" id="IPR023798">
    <property type="entry name" value="Ribosomal_uS7_dom"/>
</dbReference>
<dbReference type="InterPro" id="IPR036823">
    <property type="entry name" value="Ribosomal_uS7_dom_sf"/>
</dbReference>
<dbReference type="NCBIfam" id="TIGR01029">
    <property type="entry name" value="rpsG_bact"/>
    <property type="match status" value="1"/>
</dbReference>
<dbReference type="PANTHER" id="PTHR11205">
    <property type="entry name" value="RIBOSOMAL PROTEIN S7"/>
    <property type="match status" value="1"/>
</dbReference>
<dbReference type="Pfam" id="PF00177">
    <property type="entry name" value="Ribosomal_S7"/>
    <property type="match status" value="1"/>
</dbReference>
<dbReference type="PIRSF" id="PIRSF002122">
    <property type="entry name" value="RPS7p_RPS7a_RPS5e_RPS7o"/>
    <property type="match status" value="1"/>
</dbReference>
<dbReference type="SUPFAM" id="SSF47973">
    <property type="entry name" value="Ribosomal protein S7"/>
    <property type="match status" value="1"/>
</dbReference>
<dbReference type="PROSITE" id="PS00052">
    <property type="entry name" value="RIBOSOMAL_S7"/>
    <property type="match status" value="1"/>
</dbReference>
<proteinExistence type="inferred from homology"/>
<accession>B3EUF4</accession>
<keyword id="KW-1185">Reference proteome</keyword>
<keyword id="KW-0687">Ribonucleoprotein</keyword>
<keyword id="KW-0689">Ribosomal protein</keyword>
<keyword id="KW-0694">RNA-binding</keyword>
<keyword id="KW-0699">rRNA-binding</keyword>
<keyword id="KW-0820">tRNA-binding</keyword>
<feature type="chain" id="PRO_1000125888" description="Small ribosomal subunit protein uS7">
    <location>
        <begin position="1"/>
        <end position="155"/>
    </location>
</feature>
<evidence type="ECO:0000255" key="1">
    <source>
        <dbReference type="HAMAP-Rule" id="MF_00480"/>
    </source>
</evidence>
<evidence type="ECO:0000305" key="2"/>
<reference key="1">
    <citation type="journal article" date="2010" name="J. Bacteriol.">
        <title>The genome of the amoeba symbiont 'Candidatus Amoebophilus asiaticus' reveals common mechanisms for host cell interaction among amoeba-associated bacteria.</title>
        <authorList>
            <person name="Schmitz-Esser S."/>
            <person name="Tischler P."/>
            <person name="Arnold R."/>
            <person name="Montanaro J."/>
            <person name="Wagner M."/>
            <person name="Rattei T."/>
            <person name="Horn M."/>
        </authorList>
    </citation>
    <scope>NUCLEOTIDE SEQUENCE [LARGE SCALE GENOMIC DNA]</scope>
    <source>
        <strain>5a2</strain>
    </source>
</reference>
<name>RS7_AMOA5</name>
<gene>
    <name evidence="1" type="primary">rpsG</name>
    <name type="ordered locus">Aasi_0126</name>
</gene>
<protein>
    <recommendedName>
        <fullName evidence="1">Small ribosomal subunit protein uS7</fullName>
    </recommendedName>
    <alternativeName>
        <fullName evidence="2">30S ribosomal protein S7</fullName>
    </alternativeName>
</protein>
<comment type="function">
    <text evidence="1">One of the primary rRNA binding proteins, it binds directly to 16S rRNA where it nucleates assembly of the head domain of the 30S subunit. Is located at the subunit interface close to the decoding center, probably blocks exit of the E-site tRNA.</text>
</comment>
<comment type="subunit">
    <text evidence="1">Part of the 30S ribosomal subunit. Contacts proteins S9 and S11.</text>
</comment>
<comment type="similarity">
    <text evidence="1">Belongs to the universal ribosomal protein uS7 family.</text>
</comment>
<sequence>MRKGSPKKRTLLPDPKYKDTLVTRFVNNLMKGGKKNLAYDIFYSAVDIVGDKTGESGLEVWKKALSNVFPSVEVKRRRVGGATLQVPIEVRPERRISLGIKWMLEQARLRGEKTMQERLAYEIIAASQGEGKSVKKKADMHKMAESNRAFSHFKI</sequence>